<sequence length="474" mass="51142">MVETTNKGYVCQIIGPVLDIEFPGGKLPPIYSAIKIETADGIGNIVEVQQLLGDNKVRAVSMRSTDGLKRGVEAVDLGAPITVPVGVPTLGRIFNVIGEPVDEQGDVVVDQTLPIHRDAPAFTELETKPSIFETGIKVVDLLAPYRRGGKIGLFGGAGVGKTVLIMELINNIAKAHGGVSVFGGVGERTREGNDLYEEMKESGVINSSNFAESKVALVYGQMNEPPGARMRVGLTALTMAEYFRDVNKQDVLLFIDNIFRFTQAGSEVSALLGRMPSAVGYQPTLATEMGALQERITSTTQGSITSIQAVYVPADDLTDPAPATTFAHLDATTVLSRNLAAKGIYPAVDPLDSTSTMLQPGIVSEVHYETAETVKETLQRYKELQDIIAILGIDELSEEDRLVVARARKVERFLSQPFFVAEIFTGSPGKYVSLEETIKGFTMILNGELDDLPEQSFYLVGNIDEAIAKAETLK</sequence>
<dbReference type="EC" id="7.1.2.2" evidence="1"/>
<dbReference type="EMBL" id="EF067921">
    <property type="protein sequence ID" value="ABK20751.1"/>
    <property type="molecule type" value="Genomic_DNA"/>
</dbReference>
<dbReference type="RefSeq" id="YP_874528.1">
    <property type="nucleotide sequence ID" value="NC_008589.1"/>
</dbReference>
<dbReference type="SMR" id="A0T0R6"/>
<dbReference type="STRING" id="35128.A0T0R6"/>
<dbReference type="PaxDb" id="35128-Thapsdraft1563"/>
<dbReference type="GeneID" id="4524734"/>
<dbReference type="eggNOG" id="KOG1350">
    <property type="taxonomic scope" value="Eukaryota"/>
</dbReference>
<dbReference type="InParanoid" id="A0T0R6"/>
<dbReference type="OMA" id="IDVYFPE"/>
<dbReference type="GO" id="GO:0009535">
    <property type="term" value="C:chloroplast thylakoid membrane"/>
    <property type="evidence" value="ECO:0007669"/>
    <property type="project" value="UniProtKB-SubCell"/>
</dbReference>
<dbReference type="GO" id="GO:0005739">
    <property type="term" value="C:mitochondrion"/>
    <property type="evidence" value="ECO:0007669"/>
    <property type="project" value="GOC"/>
</dbReference>
<dbReference type="GO" id="GO:0045259">
    <property type="term" value="C:proton-transporting ATP synthase complex"/>
    <property type="evidence" value="ECO:0007669"/>
    <property type="project" value="UniProtKB-KW"/>
</dbReference>
<dbReference type="GO" id="GO:0005524">
    <property type="term" value="F:ATP binding"/>
    <property type="evidence" value="ECO:0007669"/>
    <property type="project" value="UniProtKB-UniRule"/>
</dbReference>
<dbReference type="GO" id="GO:0016887">
    <property type="term" value="F:ATP hydrolysis activity"/>
    <property type="evidence" value="ECO:0007669"/>
    <property type="project" value="InterPro"/>
</dbReference>
<dbReference type="GO" id="GO:0046933">
    <property type="term" value="F:proton-transporting ATP synthase activity, rotational mechanism"/>
    <property type="evidence" value="ECO:0007669"/>
    <property type="project" value="UniProtKB-UniRule"/>
</dbReference>
<dbReference type="GO" id="GO:0042776">
    <property type="term" value="P:proton motive force-driven mitochondrial ATP synthesis"/>
    <property type="evidence" value="ECO:0000318"/>
    <property type="project" value="GO_Central"/>
</dbReference>
<dbReference type="CDD" id="cd18110">
    <property type="entry name" value="ATP-synt_F1_beta_C"/>
    <property type="match status" value="1"/>
</dbReference>
<dbReference type="CDD" id="cd18115">
    <property type="entry name" value="ATP-synt_F1_beta_N"/>
    <property type="match status" value="1"/>
</dbReference>
<dbReference type="CDD" id="cd01133">
    <property type="entry name" value="F1-ATPase_beta_CD"/>
    <property type="match status" value="1"/>
</dbReference>
<dbReference type="FunFam" id="1.10.1140.10:FF:000001">
    <property type="entry name" value="ATP synthase subunit beta"/>
    <property type="match status" value="1"/>
</dbReference>
<dbReference type="FunFam" id="3.40.50.300:FF:000026">
    <property type="entry name" value="ATP synthase subunit beta"/>
    <property type="match status" value="1"/>
</dbReference>
<dbReference type="Gene3D" id="2.40.10.170">
    <property type="match status" value="1"/>
</dbReference>
<dbReference type="Gene3D" id="1.10.1140.10">
    <property type="entry name" value="Bovine Mitochondrial F1-atpase, Atp Synthase Beta Chain, Chain D, domain 3"/>
    <property type="match status" value="1"/>
</dbReference>
<dbReference type="Gene3D" id="3.40.50.300">
    <property type="entry name" value="P-loop containing nucleotide triphosphate hydrolases"/>
    <property type="match status" value="1"/>
</dbReference>
<dbReference type="HAMAP" id="MF_01347">
    <property type="entry name" value="ATP_synth_beta_bact"/>
    <property type="match status" value="1"/>
</dbReference>
<dbReference type="InterPro" id="IPR003593">
    <property type="entry name" value="AAA+_ATPase"/>
</dbReference>
<dbReference type="InterPro" id="IPR055190">
    <property type="entry name" value="ATP-synt_VA_C"/>
</dbReference>
<dbReference type="InterPro" id="IPR005722">
    <property type="entry name" value="ATP_synth_F1_bsu"/>
</dbReference>
<dbReference type="InterPro" id="IPR020003">
    <property type="entry name" value="ATPase_a/bsu_AS"/>
</dbReference>
<dbReference type="InterPro" id="IPR050053">
    <property type="entry name" value="ATPase_alpha/beta_chains"/>
</dbReference>
<dbReference type="InterPro" id="IPR004100">
    <property type="entry name" value="ATPase_F1/V1/A1_a/bsu_N"/>
</dbReference>
<dbReference type="InterPro" id="IPR036121">
    <property type="entry name" value="ATPase_F1/V1/A1_a/bsu_N_sf"/>
</dbReference>
<dbReference type="InterPro" id="IPR000194">
    <property type="entry name" value="ATPase_F1/V1/A1_a/bsu_nucl-bd"/>
</dbReference>
<dbReference type="InterPro" id="IPR024034">
    <property type="entry name" value="ATPase_F1/V1_b/a_C"/>
</dbReference>
<dbReference type="InterPro" id="IPR027417">
    <property type="entry name" value="P-loop_NTPase"/>
</dbReference>
<dbReference type="NCBIfam" id="TIGR01039">
    <property type="entry name" value="atpD"/>
    <property type="match status" value="1"/>
</dbReference>
<dbReference type="PANTHER" id="PTHR15184">
    <property type="entry name" value="ATP SYNTHASE"/>
    <property type="match status" value="1"/>
</dbReference>
<dbReference type="PANTHER" id="PTHR15184:SF71">
    <property type="entry name" value="ATP SYNTHASE SUBUNIT BETA, MITOCHONDRIAL"/>
    <property type="match status" value="1"/>
</dbReference>
<dbReference type="Pfam" id="PF00006">
    <property type="entry name" value="ATP-synt_ab"/>
    <property type="match status" value="1"/>
</dbReference>
<dbReference type="Pfam" id="PF02874">
    <property type="entry name" value="ATP-synt_ab_N"/>
    <property type="match status" value="1"/>
</dbReference>
<dbReference type="Pfam" id="PF22919">
    <property type="entry name" value="ATP-synt_VA_C"/>
    <property type="match status" value="1"/>
</dbReference>
<dbReference type="SMART" id="SM00382">
    <property type="entry name" value="AAA"/>
    <property type="match status" value="1"/>
</dbReference>
<dbReference type="SUPFAM" id="SSF47917">
    <property type="entry name" value="C-terminal domain of alpha and beta subunits of F1 ATP synthase"/>
    <property type="match status" value="1"/>
</dbReference>
<dbReference type="SUPFAM" id="SSF50615">
    <property type="entry name" value="N-terminal domain of alpha and beta subunits of F1 ATP synthase"/>
    <property type="match status" value="1"/>
</dbReference>
<dbReference type="SUPFAM" id="SSF52540">
    <property type="entry name" value="P-loop containing nucleoside triphosphate hydrolases"/>
    <property type="match status" value="1"/>
</dbReference>
<dbReference type="PROSITE" id="PS00152">
    <property type="entry name" value="ATPASE_ALPHA_BETA"/>
    <property type="match status" value="1"/>
</dbReference>
<comment type="function">
    <text evidence="1">Produces ATP from ADP in the presence of a proton gradient across the membrane. The catalytic sites are hosted primarily by the beta subunits.</text>
</comment>
<comment type="catalytic activity">
    <reaction evidence="1">
        <text>ATP + H2O + 4 H(+)(in) = ADP + phosphate + 5 H(+)(out)</text>
        <dbReference type="Rhea" id="RHEA:57720"/>
        <dbReference type="ChEBI" id="CHEBI:15377"/>
        <dbReference type="ChEBI" id="CHEBI:15378"/>
        <dbReference type="ChEBI" id="CHEBI:30616"/>
        <dbReference type="ChEBI" id="CHEBI:43474"/>
        <dbReference type="ChEBI" id="CHEBI:456216"/>
        <dbReference type="EC" id="7.1.2.2"/>
    </reaction>
</comment>
<comment type="subunit">
    <text evidence="1">F-type ATPases have 2 components, CF(1) - the catalytic core - and CF(0) - the membrane proton channel. CF(1) has five subunits: alpha(3), beta(3), gamma(1), delta(1), epsilon(1). CF(0) has four main subunits: a(1), b(1), b'(1) and c(9-12).</text>
</comment>
<comment type="subcellular location">
    <subcellularLocation>
        <location evidence="1">Plastid</location>
        <location evidence="1">Chloroplast thylakoid membrane</location>
        <topology evidence="1">Peripheral membrane protein</topology>
    </subcellularLocation>
</comment>
<comment type="similarity">
    <text evidence="1">Belongs to the ATPase alpha/beta chains family.</text>
</comment>
<keyword id="KW-0066">ATP synthesis</keyword>
<keyword id="KW-0067">ATP-binding</keyword>
<keyword id="KW-0139">CF(1)</keyword>
<keyword id="KW-0150">Chloroplast</keyword>
<keyword id="KW-0375">Hydrogen ion transport</keyword>
<keyword id="KW-0406">Ion transport</keyword>
<keyword id="KW-0472">Membrane</keyword>
<keyword id="KW-0547">Nucleotide-binding</keyword>
<keyword id="KW-0934">Plastid</keyword>
<keyword id="KW-0793">Thylakoid</keyword>
<keyword id="KW-1278">Translocase</keyword>
<keyword id="KW-0813">Transport</keyword>
<proteinExistence type="inferred from homology"/>
<organism>
    <name type="scientific">Thalassiosira pseudonana</name>
    <name type="common">Marine diatom</name>
    <name type="synonym">Cyclotella nana</name>
    <dbReference type="NCBI Taxonomy" id="35128"/>
    <lineage>
        <taxon>Eukaryota</taxon>
        <taxon>Sar</taxon>
        <taxon>Stramenopiles</taxon>
        <taxon>Ochrophyta</taxon>
        <taxon>Bacillariophyta</taxon>
        <taxon>Coscinodiscophyceae</taxon>
        <taxon>Thalassiosirophycidae</taxon>
        <taxon>Thalassiosirales</taxon>
        <taxon>Thalassiosiraceae</taxon>
        <taxon>Thalassiosira</taxon>
    </lineage>
</organism>
<evidence type="ECO:0000255" key="1">
    <source>
        <dbReference type="HAMAP-Rule" id="MF_01347"/>
    </source>
</evidence>
<accession>A0T0R6</accession>
<name>ATPB_THAPS</name>
<geneLocation type="chloroplast"/>
<protein>
    <recommendedName>
        <fullName evidence="1">ATP synthase subunit beta, chloroplastic</fullName>
        <ecNumber evidence="1">7.1.2.2</ecNumber>
    </recommendedName>
    <alternativeName>
        <fullName evidence="1">ATP synthase F1 sector subunit beta</fullName>
    </alternativeName>
    <alternativeName>
        <fullName evidence="1">F-ATPase subunit beta</fullName>
    </alternativeName>
</protein>
<reference key="1">
    <citation type="journal article" date="2007" name="Mol. Genet. Genomics">
        <title>Chloroplast genomes of the diatoms Phaeodactylum tricornutum and Thalassiosira pseudonana: comparison with other plastid genomes of the red lineage.</title>
        <authorList>
            <person name="Oudot-Le Secq M.-P."/>
            <person name="Grimwood J."/>
            <person name="Shapiro H."/>
            <person name="Armbrust E.V."/>
            <person name="Bowler C."/>
            <person name="Green B.R."/>
        </authorList>
    </citation>
    <scope>NUCLEOTIDE SEQUENCE [LARGE SCALE GENOMIC DNA]</scope>
    <source>
        <strain>CCMP1335 / NEPCC58 / CCAP 1085/12</strain>
    </source>
</reference>
<gene>
    <name evidence="1" type="primary">atpB</name>
</gene>
<feature type="chain" id="PRO_0000275190" description="ATP synthase subunit beta, chloroplastic">
    <location>
        <begin position="1"/>
        <end position="474"/>
    </location>
</feature>
<feature type="binding site" evidence="1">
    <location>
        <begin position="155"/>
        <end position="162"/>
    </location>
    <ligand>
        <name>ATP</name>
        <dbReference type="ChEBI" id="CHEBI:30616"/>
    </ligand>
</feature>